<name>PNP_RUMCH</name>
<keyword id="KW-0963">Cytoplasm</keyword>
<keyword id="KW-0460">Magnesium</keyword>
<keyword id="KW-0479">Metal-binding</keyword>
<keyword id="KW-0548">Nucleotidyltransferase</keyword>
<keyword id="KW-1185">Reference proteome</keyword>
<keyword id="KW-0694">RNA-binding</keyword>
<keyword id="KW-0808">Transferase</keyword>
<feature type="chain" id="PRO_1000185730" description="Polyribonucleotide nucleotidyltransferase">
    <location>
        <begin position="1"/>
        <end position="703"/>
    </location>
</feature>
<feature type="domain" description="KH" evidence="1">
    <location>
        <begin position="554"/>
        <end position="613"/>
    </location>
</feature>
<feature type="domain" description="S1 motif" evidence="1">
    <location>
        <begin position="623"/>
        <end position="691"/>
    </location>
</feature>
<feature type="binding site" evidence="1">
    <location>
        <position position="486"/>
    </location>
    <ligand>
        <name>Mg(2+)</name>
        <dbReference type="ChEBI" id="CHEBI:18420"/>
    </ligand>
</feature>
<feature type="binding site" evidence="1">
    <location>
        <position position="492"/>
    </location>
    <ligand>
        <name>Mg(2+)</name>
        <dbReference type="ChEBI" id="CHEBI:18420"/>
    </ligand>
</feature>
<accession>B8I2R5</accession>
<sequence length="703" mass="76926">MFKSFSMELAGRTLTVETGKLAQLANGSALIRYGDTVIMSSATASAAPRDGIDFFPLSVDYEERLYAVGKIPGGFIKREGKPSEKAILTSRVIDRPIRPLFPKDLRNDVAVVNTVMSVEQDNSPEIAAMIGASVAISISDIPFNGPIGGVVLGLVDGEVIINPNEEQRAKSKMYVTLAGTKEKITMIEAGADIVPDDVMFDAIKKGHEEIKKICDFINGIVKEVGKAKFTYESADVPADLFEVVKEFAYDKMRIAVLATDKQDRDAKVSQLTEETQAALAEQFPEMESKINDALYKLEKKVVREYILKEGKRIDGRRLDEIRTLSAEVGILPRTHGSGLFERGQTQVLTTVTLGAMGDVQMLDGIDTEETKRYMHHYNFPGYSVGEAKTSRGPGRREIGHGALAERSLVPVIPTETEFPYAFRLVSEVLMSNGSTSQGSVCGSTLALMDAGVPIKAPVAGISAGLVIDEENPDNFVTFMDIQGIEDFFGDMDFKVAGTTEGITAIQMDIKVDGLSYEIIRQAFELTRMGRLQIINDVILKAIPQPRKELSEYAPKIITTNIDPEKIRDVIGPGGKMINKIIAETGVKIDIEEDGRVYILTPDSAAAQKALKIIQGIAKDIEPGEVYLGKVVRITTFGAFVEILPGKDGLVHISKLDKKRVEKVEDVVSIGDEILVKVTEIDKQGRINLSRKDAMAEENTTEEK</sequence>
<protein>
    <recommendedName>
        <fullName evidence="1">Polyribonucleotide nucleotidyltransferase</fullName>
        <ecNumber evidence="1">2.7.7.8</ecNumber>
    </recommendedName>
    <alternativeName>
        <fullName evidence="1">Polynucleotide phosphorylase</fullName>
        <shortName evidence="1">PNPase</shortName>
    </alternativeName>
</protein>
<comment type="function">
    <text evidence="1">Involved in mRNA degradation. Catalyzes the phosphorolysis of single-stranded polyribonucleotides processively in the 3'- to 5'-direction.</text>
</comment>
<comment type="catalytic activity">
    <reaction evidence="1">
        <text>RNA(n+1) + phosphate = RNA(n) + a ribonucleoside 5'-diphosphate</text>
        <dbReference type="Rhea" id="RHEA:22096"/>
        <dbReference type="Rhea" id="RHEA-COMP:14527"/>
        <dbReference type="Rhea" id="RHEA-COMP:17342"/>
        <dbReference type="ChEBI" id="CHEBI:43474"/>
        <dbReference type="ChEBI" id="CHEBI:57930"/>
        <dbReference type="ChEBI" id="CHEBI:140395"/>
        <dbReference type="EC" id="2.7.7.8"/>
    </reaction>
</comment>
<comment type="cofactor">
    <cofactor evidence="1">
        <name>Mg(2+)</name>
        <dbReference type="ChEBI" id="CHEBI:18420"/>
    </cofactor>
</comment>
<comment type="subcellular location">
    <subcellularLocation>
        <location evidence="1">Cytoplasm</location>
    </subcellularLocation>
</comment>
<comment type="similarity">
    <text evidence="1">Belongs to the polyribonucleotide nucleotidyltransferase family.</text>
</comment>
<reference key="1">
    <citation type="submission" date="2009-01" db="EMBL/GenBank/DDBJ databases">
        <title>Complete sequence of Clostridium cellulolyticum H10.</title>
        <authorList>
            <consortium name="US DOE Joint Genome Institute"/>
            <person name="Lucas S."/>
            <person name="Copeland A."/>
            <person name="Lapidus A."/>
            <person name="Glavina del Rio T."/>
            <person name="Dalin E."/>
            <person name="Tice H."/>
            <person name="Bruce D."/>
            <person name="Goodwin L."/>
            <person name="Pitluck S."/>
            <person name="Chertkov O."/>
            <person name="Saunders E."/>
            <person name="Brettin T."/>
            <person name="Detter J.C."/>
            <person name="Han C."/>
            <person name="Larimer F."/>
            <person name="Land M."/>
            <person name="Hauser L."/>
            <person name="Kyrpides N."/>
            <person name="Ivanova N."/>
            <person name="Zhou J."/>
            <person name="Richardson P."/>
        </authorList>
    </citation>
    <scope>NUCLEOTIDE SEQUENCE [LARGE SCALE GENOMIC DNA]</scope>
    <source>
        <strain>ATCC 35319 / DSM 5812 / JCM 6584 / H10</strain>
    </source>
</reference>
<proteinExistence type="inferred from homology"/>
<dbReference type="EC" id="2.7.7.8" evidence="1"/>
<dbReference type="EMBL" id="CP001348">
    <property type="protein sequence ID" value="ACL76058.1"/>
    <property type="molecule type" value="Genomic_DNA"/>
</dbReference>
<dbReference type="RefSeq" id="WP_015925173.1">
    <property type="nucleotide sequence ID" value="NC_011898.1"/>
</dbReference>
<dbReference type="SMR" id="B8I2R5"/>
<dbReference type="STRING" id="394503.Ccel_1707"/>
<dbReference type="KEGG" id="cce:Ccel_1707"/>
<dbReference type="eggNOG" id="COG1185">
    <property type="taxonomic scope" value="Bacteria"/>
</dbReference>
<dbReference type="HOGENOM" id="CLU_004217_2_2_9"/>
<dbReference type="OrthoDB" id="9804305at2"/>
<dbReference type="Proteomes" id="UP000001349">
    <property type="component" value="Chromosome"/>
</dbReference>
<dbReference type="GO" id="GO:0005829">
    <property type="term" value="C:cytosol"/>
    <property type="evidence" value="ECO:0007669"/>
    <property type="project" value="TreeGrafter"/>
</dbReference>
<dbReference type="GO" id="GO:0000175">
    <property type="term" value="F:3'-5'-RNA exonuclease activity"/>
    <property type="evidence" value="ECO:0007669"/>
    <property type="project" value="TreeGrafter"/>
</dbReference>
<dbReference type="GO" id="GO:0000287">
    <property type="term" value="F:magnesium ion binding"/>
    <property type="evidence" value="ECO:0007669"/>
    <property type="project" value="UniProtKB-UniRule"/>
</dbReference>
<dbReference type="GO" id="GO:0004654">
    <property type="term" value="F:polyribonucleotide nucleotidyltransferase activity"/>
    <property type="evidence" value="ECO:0007669"/>
    <property type="project" value="UniProtKB-UniRule"/>
</dbReference>
<dbReference type="GO" id="GO:0003723">
    <property type="term" value="F:RNA binding"/>
    <property type="evidence" value="ECO:0007669"/>
    <property type="project" value="UniProtKB-UniRule"/>
</dbReference>
<dbReference type="GO" id="GO:0006402">
    <property type="term" value="P:mRNA catabolic process"/>
    <property type="evidence" value="ECO:0007669"/>
    <property type="project" value="UniProtKB-UniRule"/>
</dbReference>
<dbReference type="GO" id="GO:0006396">
    <property type="term" value="P:RNA processing"/>
    <property type="evidence" value="ECO:0007669"/>
    <property type="project" value="InterPro"/>
</dbReference>
<dbReference type="CDD" id="cd02393">
    <property type="entry name" value="KH-I_PNPase"/>
    <property type="match status" value="1"/>
</dbReference>
<dbReference type="CDD" id="cd11363">
    <property type="entry name" value="RNase_PH_PNPase_1"/>
    <property type="match status" value="1"/>
</dbReference>
<dbReference type="CDD" id="cd11364">
    <property type="entry name" value="RNase_PH_PNPase_2"/>
    <property type="match status" value="1"/>
</dbReference>
<dbReference type="CDD" id="cd04472">
    <property type="entry name" value="S1_PNPase"/>
    <property type="match status" value="1"/>
</dbReference>
<dbReference type="FunFam" id="2.40.50.140:FF:000023">
    <property type="entry name" value="Polyribonucleotide nucleotidyltransferase"/>
    <property type="match status" value="1"/>
</dbReference>
<dbReference type="FunFam" id="3.30.1370.10:FF:000001">
    <property type="entry name" value="Polyribonucleotide nucleotidyltransferase"/>
    <property type="match status" value="1"/>
</dbReference>
<dbReference type="FunFam" id="3.30.230.70:FF:000001">
    <property type="entry name" value="Polyribonucleotide nucleotidyltransferase"/>
    <property type="match status" value="1"/>
</dbReference>
<dbReference type="FunFam" id="3.30.230.70:FF:000002">
    <property type="entry name" value="Polyribonucleotide nucleotidyltransferase"/>
    <property type="match status" value="1"/>
</dbReference>
<dbReference type="Gene3D" id="3.30.230.70">
    <property type="entry name" value="GHMP Kinase, N-terminal domain"/>
    <property type="match status" value="2"/>
</dbReference>
<dbReference type="Gene3D" id="3.30.1370.10">
    <property type="entry name" value="K Homology domain, type 1"/>
    <property type="match status" value="1"/>
</dbReference>
<dbReference type="Gene3D" id="2.40.50.140">
    <property type="entry name" value="Nucleic acid-binding proteins"/>
    <property type="match status" value="1"/>
</dbReference>
<dbReference type="HAMAP" id="MF_01595">
    <property type="entry name" value="PNPase"/>
    <property type="match status" value="1"/>
</dbReference>
<dbReference type="InterPro" id="IPR001247">
    <property type="entry name" value="ExoRNase_PH_dom1"/>
</dbReference>
<dbReference type="InterPro" id="IPR015847">
    <property type="entry name" value="ExoRNase_PH_dom2"/>
</dbReference>
<dbReference type="InterPro" id="IPR036345">
    <property type="entry name" value="ExoRNase_PH_dom2_sf"/>
</dbReference>
<dbReference type="InterPro" id="IPR004087">
    <property type="entry name" value="KH_dom"/>
</dbReference>
<dbReference type="InterPro" id="IPR004088">
    <property type="entry name" value="KH_dom_type_1"/>
</dbReference>
<dbReference type="InterPro" id="IPR036612">
    <property type="entry name" value="KH_dom_type_1_sf"/>
</dbReference>
<dbReference type="InterPro" id="IPR012340">
    <property type="entry name" value="NA-bd_OB-fold"/>
</dbReference>
<dbReference type="InterPro" id="IPR012162">
    <property type="entry name" value="PNPase"/>
</dbReference>
<dbReference type="InterPro" id="IPR027408">
    <property type="entry name" value="PNPase/RNase_PH_dom_sf"/>
</dbReference>
<dbReference type="InterPro" id="IPR015848">
    <property type="entry name" value="PNPase_PH_RNA-bd_bac/org-type"/>
</dbReference>
<dbReference type="InterPro" id="IPR036456">
    <property type="entry name" value="PNPase_PH_RNA-bd_sf"/>
</dbReference>
<dbReference type="InterPro" id="IPR020568">
    <property type="entry name" value="Ribosomal_Su5_D2-typ_SF"/>
</dbReference>
<dbReference type="InterPro" id="IPR003029">
    <property type="entry name" value="S1_domain"/>
</dbReference>
<dbReference type="NCBIfam" id="TIGR03591">
    <property type="entry name" value="polynuc_phos"/>
    <property type="match status" value="1"/>
</dbReference>
<dbReference type="NCBIfam" id="NF008805">
    <property type="entry name" value="PRK11824.1"/>
    <property type="match status" value="1"/>
</dbReference>
<dbReference type="PANTHER" id="PTHR11252">
    <property type="entry name" value="POLYRIBONUCLEOTIDE NUCLEOTIDYLTRANSFERASE"/>
    <property type="match status" value="1"/>
</dbReference>
<dbReference type="PANTHER" id="PTHR11252:SF0">
    <property type="entry name" value="POLYRIBONUCLEOTIDE NUCLEOTIDYLTRANSFERASE 1, MITOCHONDRIAL"/>
    <property type="match status" value="1"/>
</dbReference>
<dbReference type="Pfam" id="PF00013">
    <property type="entry name" value="KH_1"/>
    <property type="match status" value="1"/>
</dbReference>
<dbReference type="Pfam" id="PF03726">
    <property type="entry name" value="PNPase"/>
    <property type="match status" value="1"/>
</dbReference>
<dbReference type="Pfam" id="PF01138">
    <property type="entry name" value="RNase_PH"/>
    <property type="match status" value="2"/>
</dbReference>
<dbReference type="Pfam" id="PF03725">
    <property type="entry name" value="RNase_PH_C"/>
    <property type="match status" value="1"/>
</dbReference>
<dbReference type="Pfam" id="PF00575">
    <property type="entry name" value="S1"/>
    <property type="match status" value="1"/>
</dbReference>
<dbReference type="PIRSF" id="PIRSF005499">
    <property type="entry name" value="PNPase"/>
    <property type="match status" value="1"/>
</dbReference>
<dbReference type="SMART" id="SM00322">
    <property type="entry name" value="KH"/>
    <property type="match status" value="1"/>
</dbReference>
<dbReference type="SMART" id="SM00316">
    <property type="entry name" value="S1"/>
    <property type="match status" value="1"/>
</dbReference>
<dbReference type="SUPFAM" id="SSF54791">
    <property type="entry name" value="Eukaryotic type KH-domain (KH-domain type I)"/>
    <property type="match status" value="1"/>
</dbReference>
<dbReference type="SUPFAM" id="SSF50249">
    <property type="entry name" value="Nucleic acid-binding proteins"/>
    <property type="match status" value="1"/>
</dbReference>
<dbReference type="SUPFAM" id="SSF46915">
    <property type="entry name" value="Polynucleotide phosphorylase/guanosine pentaphosphate synthase (PNPase/GPSI), domain 3"/>
    <property type="match status" value="1"/>
</dbReference>
<dbReference type="SUPFAM" id="SSF55666">
    <property type="entry name" value="Ribonuclease PH domain 2-like"/>
    <property type="match status" value="2"/>
</dbReference>
<dbReference type="SUPFAM" id="SSF54211">
    <property type="entry name" value="Ribosomal protein S5 domain 2-like"/>
    <property type="match status" value="2"/>
</dbReference>
<dbReference type="PROSITE" id="PS50084">
    <property type="entry name" value="KH_TYPE_1"/>
    <property type="match status" value="1"/>
</dbReference>
<dbReference type="PROSITE" id="PS50126">
    <property type="entry name" value="S1"/>
    <property type="match status" value="1"/>
</dbReference>
<organism>
    <name type="scientific">Ruminiclostridium cellulolyticum (strain ATCC 35319 / DSM 5812 / JCM 6584 / H10)</name>
    <name type="common">Clostridium cellulolyticum</name>
    <dbReference type="NCBI Taxonomy" id="394503"/>
    <lineage>
        <taxon>Bacteria</taxon>
        <taxon>Bacillati</taxon>
        <taxon>Bacillota</taxon>
        <taxon>Clostridia</taxon>
        <taxon>Eubacteriales</taxon>
        <taxon>Oscillospiraceae</taxon>
        <taxon>Ruminiclostridium</taxon>
    </lineage>
</organism>
<evidence type="ECO:0000255" key="1">
    <source>
        <dbReference type="HAMAP-Rule" id="MF_01595"/>
    </source>
</evidence>
<gene>
    <name evidence="1" type="primary">pnp</name>
    <name type="ordered locus">Ccel_1707</name>
</gene>